<proteinExistence type="inferred from homology"/>
<organism>
    <name type="scientific">Mycoplasma pneumoniae (strain ATCC 29342 / M129 / Subtype 1)</name>
    <name type="common">Mycoplasmoides pneumoniae</name>
    <dbReference type="NCBI Taxonomy" id="272634"/>
    <lineage>
        <taxon>Bacteria</taxon>
        <taxon>Bacillati</taxon>
        <taxon>Mycoplasmatota</taxon>
        <taxon>Mycoplasmoidales</taxon>
        <taxon>Mycoplasmoidaceae</taxon>
        <taxon>Mycoplasmoides</taxon>
    </lineage>
</organism>
<accession>P75155</accession>
<reference key="1">
    <citation type="journal article" date="1996" name="Nucleic Acids Res.">
        <title>Complete sequence analysis of the genome of the bacterium Mycoplasma pneumoniae.</title>
        <authorList>
            <person name="Himmelreich R."/>
            <person name="Hilbert H."/>
            <person name="Plagens H."/>
            <person name="Pirkl E."/>
            <person name="Li B.-C."/>
            <person name="Herrmann R."/>
        </authorList>
    </citation>
    <scope>NUCLEOTIDE SEQUENCE [LARGE SCALE GENOMIC DNA]</scope>
    <source>
        <strain>ATCC 29342 / M129 / Subtype 1</strain>
    </source>
</reference>
<dbReference type="EMBL" id="U00089">
    <property type="protein sequence ID" value="AAB95848.1"/>
    <property type="molecule type" value="Genomic_DNA"/>
</dbReference>
<dbReference type="PIR" id="S73526">
    <property type="entry name" value="S73526"/>
</dbReference>
<dbReference type="RefSeq" id="NP_110331.1">
    <property type="nucleotide sequence ID" value="NC_000912.1"/>
</dbReference>
<dbReference type="RefSeq" id="WP_010874999.1">
    <property type="nucleotide sequence ID" value="NZ_OU342337.1"/>
</dbReference>
<dbReference type="IntAct" id="P75155">
    <property type="interactions" value="1"/>
</dbReference>
<dbReference type="STRING" id="272634.MPN_642"/>
<dbReference type="EnsemblBacteria" id="AAB95848">
    <property type="protein sequence ID" value="AAB95848"/>
    <property type="gene ID" value="MPN_642"/>
</dbReference>
<dbReference type="KEGG" id="mpn:MPN_642"/>
<dbReference type="PATRIC" id="fig|272634.6.peg.705"/>
<dbReference type="HOGENOM" id="CLU_080699_0_0_14"/>
<dbReference type="BioCyc" id="MPNE272634:G1GJ3-1026-MONOMER"/>
<dbReference type="Proteomes" id="UP000000808">
    <property type="component" value="Chromosome"/>
</dbReference>
<dbReference type="GO" id="GO:0005886">
    <property type="term" value="C:plasma membrane"/>
    <property type="evidence" value="ECO:0007669"/>
    <property type="project" value="UniProtKB-SubCell"/>
</dbReference>
<dbReference type="InterPro" id="IPR001595">
    <property type="entry name" value="Lipoprotein_3"/>
</dbReference>
<dbReference type="Pfam" id="PF00938">
    <property type="entry name" value="Lipoprotein_3"/>
    <property type="match status" value="1"/>
</dbReference>
<dbReference type="PROSITE" id="PS51257">
    <property type="entry name" value="PROKAR_LIPOPROTEIN"/>
    <property type="match status" value="1"/>
</dbReference>
<comment type="subcellular location">
    <subcellularLocation>
        <location evidence="1">Cell membrane</location>
        <topology evidence="1">Lipid-anchor</topology>
    </subcellularLocation>
</comment>
<comment type="similarity">
    <text evidence="2">Belongs to the MG439/MG440 family.</text>
</comment>
<protein>
    <recommendedName>
        <fullName>Uncharacterized lipoprotein MG439 homolog 4</fullName>
    </recommendedName>
</protein>
<keyword id="KW-1003">Cell membrane</keyword>
<keyword id="KW-0449">Lipoprotein</keyword>
<keyword id="KW-0472">Membrane</keyword>
<keyword id="KW-0564">Palmitate</keyword>
<keyword id="KW-1185">Reference proteome</keyword>
<keyword id="KW-0732">Signal</keyword>
<feature type="signal peptide" evidence="1">
    <location>
        <begin position="1"/>
        <end position="19"/>
    </location>
</feature>
<feature type="chain" id="PRO_0000014046" description="Uncharacterized lipoprotein MG439 homolog 4">
    <location>
        <begin position="20"/>
        <end position="279"/>
    </location>
</feature>
<feature type="lipid moiety-binding region" description="N-palmitoyl cysteine" evidence="1">
    <location>
        <position position="20"/>
    </location>
</feature>
<feature type="lipid moiety-binding region" description="S-diacylglycerol cysteine" evidence="1">
    <location>
        <position position="20"/>
    </location>
</feature>
<sequence>MKLKLYLIPLLASGIILSACSSTTSQVISSLSSAQKYFEANKGELNKNNVINILKDGYNSDPNKTVNALLAGWKYTLMDQKLLENNLDPSRFKNTFGPNKNKDDVTPNISEKGLFLNETFTGLGSQIAEVFNVQKQIVSGFSYSWTSPKSFKVNIHIKMEGMINEKSKETIKSFLSNKDSNGSNSVEESEYTGDKAKFTADFIFSYTPPTGGTRSLTDKSFDVITNMINFPADVKIDVNTSHNKLNELLEKNDQVKRMKSRTFNGRNIDLLPFFYYALL</sequence>
<gene>
    <name type="ordered locus">MPN_642</name>
    <name type="ORF">E09_orf279</name>
    <name type="ORF">MP200</name>
</gene>
<name>Y642_MYCPN</name>
<evidence type="ECO:0000255" key="1">
    <source>
        <dbReference type="PROSITE-ProRule" id="PRU00303"/>
    </source>
</evidence>
<evidence type="ECO:0000305" key="2"/>